<protein>
    <recommendedName>
        <fullName>Homocysteine S-methyltransferase 3</fullName>
        <ecNumber>2.1.1.10</ecNumber>
    </recommendedName>
    <alternativeName>
        <fullName>S-methylmethionine:homocysteine methyltransferase 3</fullName>
        <shortName>SMM:Hcy S-methyltransferase 3</shortName>
    </alternativeName>
    <alternativeName>
        <fullName>ZmHMT-3</fullName>
    </alternativeName>
</protein>
<evidence type="ECO:0000250" key="1"/>
<evidence type="ECO:0000255" key="2">
    <source>
        <dbReference type="PROSITE-ProRule" id="PRU00333"/>
    </source>
</evidence>
<sequence>MVGTAEGGAERAVRRWVDAAGGRLVLDGGLATELEANGADLNDPLWSAKCLLSSPHLIRKVHMDYLEAGANIIITASYQATIQGFESKGFSKEQSENLLTKSVQIALEAREMFLKEHLEKSTPIQHPILVAAALGSYGAYLADGSEYSGDYGEAGTKEFLKDFHRRRLQVLAEAGPDLIAFETIPNKLEAQAYVELLEECNINIPSWLSFNSKDGVHVVSGDSLIECATIADKCAKVGAVGINCTPPRFIHGLILSIRKVTDKPILIYPNSGERYDGEKKEWVESTGVSDGDFVSYVNEWCKDGAALIGGCCRTTPNTIRAIHRTLNQGCHKHQLPVA</sequence>
<proteinExistence type="evidence at transcript level"/>
<accession>Q9FUM8</accession>
<name>HMT3_MAIZE</name>
<keyword id="KW-0028">Amino-acid biosynthesis</keyword>
<keyword id="KW-0479">Metal-binding</keyword>
<keyword id="KW-0486">Methionine biosynthesis</keyword>
<keyword id="KW-0489">Methyltransferase</keyword>
<keyword id="KW-1185">Reference proteome</keyword>
<keyword id="KW-0949">S-adenosyl-L-methionine</keyword>
<keyword id="KW-0808">Transferase</keyword>
<keyword id="KW-0862">Zinc</keyword>
<gene>
    <name type="primary">HMT-3</name>
</gene>
<feature type="chain" id="PRO_0000114616" description="Homocysteine S-methyltransferase 3">
    <location>
        <begin position="1"/>
        <end position="338"/>
    </location>
</feature>
<feature type="domain" description="Hcy-binding" evidence="2">
    <location>
        <begin position="12"/>
        <end position="326"/>
    </location>
</feature>
<feature type="binding site" evidence="2">
    <location>
        <position position="244"/>
    </location>
    <ligand>
        <name>Zn(2+)</name>
        <dbReference type="ChEBI" id="CHEBI:29105"/>
    </ligand>
</feature>
<feature type="binding site" evidence="2">
    <location>
        <position position="311"/>
    </location>
    <ligand>
        <name>Zn(2+)</name>
        <dbReference type="ChEBI" id="CHEBI:29105"/>
    </ligand>
</feature>
<feature type="binding site" evidence="2">
    <location>
        <position position="312"/>
    </location>
    <ligand>
        <name>Zn(2+)</name>
        <dbReference type="ChEBI" id="CHEBI:29105"/>
    </ligand>
</feature>
<organism>
    <name type="scientific">Zea mays</name>
    <name type="common">Maize</name>
    <dbReference type="NCBI Taxonomy" id="4577"/>
    <lineage>
        <taxon>Eukaryota</taxon>
        <taxon>Viridiplantae</taxon>
        <taxon>Streptophyta</taxon>
        <taxon>Embryophyta</taxon>
        <taxon>Tracheophyta</taxon>
        <taxon>Spermatophyta</taxon>
        <taxon>Magnoliopsida</taxon>
        <taxon>Liliopsida</taxon>
        <taxon>Poales</taxon>
        <taxon>Poaceae</taxon>
        <taxon>PACMAD clade</taxon>
        <taxon>Panicoideae</taxon>
        <taxon>Andropogonodae</taxon>
        <taxon>Andropogoneae</taxon>
        <taxon>Tripsacinae</taxon>
        <taxon>Zea</taxon>
    </lineage>
</organism>
<reference key="1">
    <citation type="journal article" date="2001" name="Plant J.">
        <title>The S-methylmethionine cycle in angiosperms: ubiquity, antiquity and activity.</title>
        <authorList>
            <person name="Ranocha P."/>
            <person name="McNeil S.D."/>
            <person name="Ziemak M.J."/>
            <person name="Li C."/>
            <person name="Tarczynski M.C."/>
            <person name="Hanson A.D."/>
        </authorList>
    </citation>
    <scope>NUCLEOTIDE SEQUENCE [MRNA]</scope>
</reference>
<comment type="function">
    <text evidence="1">Catalyzes methyl transfer from S-methylmethionine (SMM) to adenosyl-L-homocysteine (AdoMet). SMM degradation (by HMT-1, HMT-2, HMT-3 and HMT-4) and biosynthesis (by MMT1) constitute the SMM cycle in plants, which is probably required to achieve short term control of AdoMet level (By similarity).</text>
</comment>
<comment type="catalytic activity">
    <reaction>
        <text>S-methyl-L-methionine + L-homocysteine = 2 L-methionine + H(+)</text>
        <dbReference type="Rhea" id="RHEA:26337"/>
        <dbReference type="ChEBI" id="CHEBI:15378"/>
        <dbReference type="ChEBI" id="CHEBI:57844"/>
        <dbReference type="ChEBI" id="CHEBI:58199"/>
        <dbReference type="ChEBI" id="CHEBI:58252"/>
        <dbReference type="EC" id="2.1.1.10"/>
    </reaction>
</comment>
<comment type="cofactor">
    <cofactor evidence="2">
        <name>Zn(2+)</name>
        <dbReference type="ChEBI" id="CHEBI:29105"/>
    </cofactor>
</comment>
<comment type="subunit">
    <text evidence="1">Monomer.</text>
</comment>
<dbReference type="EC" id="2.1.1.10"/>
<dbReference type="EMBL" id="AF297046">
    <property type="protein sequence ID" value="AAG22539.1"/>
    <property type="molecule type" value="mRNA"/>
</dbReference>
<dbReference type="RefSeq" id="NP_001105013.1">
    <property type="nucleotide sequence ID" value="NM_001111543.2"/>
</dbReference>
<dbReference type="SMR" id="Q9FUM8"/>
<dbReference type="FunCoup" id="Q9FUM8">
    <property type="interactions" value="228"/>
</dbReference>
<dbReference type="STRING" id="4577.Q9FUM8"/>
<dbReference type="PaxDb" id="4577-GRMZM2G152470_P01"/>
<dbReference type="EnsemblPlants" id="Zm00001eb135800_T002">
    <property type="protein sequence ID" value="Zm00001eb135800_P002"/>
    <property type="gene ID" value="Zm00001eb135800"/>
</dbReference>
<dbReference type="GeneID" id="541875"/>
<dbReference type="Gramene" id="Zm00001eb135800_T002">
    <property type="protein sequence ID" value="Zm00001eb135800_P002"/>
    <property type="gene ID" value="Zm00001eb135800"/>
</dbReference>
<dbReference type="KEGG" id="zma:541875"/>
<dbReference type="eggNOG" id="KOG1579">
    <property type="taxonomic scope" value="Eukaryota"/>
</dbReference>
<dbReference type="HOGENOM" id="CLU_004914_3_2_1"/>
<dbReference type="InParanoid" id="Q9FUM8"/>
<dbReference type="OMA" id="CSQPEVI"/>
<dbReference type="OrthoDB" id="261426at2759"/>
<dbReference type="Proteomes" id="UP000007305">
    <property type="component" value="Chromosome 3"/>
</dbReference>
<dbReference type="ExpressionAtlas" id="Q9FUM8">
    <property type="expression patterns" value="baseline and differential"/>
</dbReference>
<dbReference type="GO" id="GO:0061627">
    <property type="term" value="F:S-methylmethionine-homocysteine S-methyltransferase activity"/>
    <property type="evidence" value="ECO:0007669"/>
    <property type="project" value="RHEA"/>
</dbReference>
<dbReference type="GO" id="GO:0008270">
    <property type="term" value="F:zinc ion binding"/>
    <property type="evidence" value="ECO:0007669"/>
    <property type="project" value="InterPro"/>
</dbReference>
<dbReference type="GO" id="GO:0009086">
    <property type="term" value="P:methionine biosynthetic process"/>
    <property type="evidence" value="ECO:0007669"/>
    <property type="project" value="UniProtKB-KW"/>
</dbReference>
<dbReference type="GO" id="GO:0032259">
    <property type="term" value="P:methylation"/>
    <property type="evidence" value="ECO:0007669"/>
    <property type="project" value="UniProtKB-KW"/>
</dbReference>
<dbReference type="FunFam" id="3.20.20.330:FF:000002">
    <property type="entry name" value="Homocysteine S-methyltransferase"/>
    <property type="match status" value="1"/>
</dbReference>
<dbReference type="Gene3D" id="3.20.20.330">
    <property type="entry name" value="Homocysteine-binding-like domain"/>
    <property type="match status" value="1"/>
</dbReference>
<dbReference type="InterPro" id="IPR017226">
    <property type="entry name" value="Betaine-hCys_S-MeTrfase_BHMT"/>
</dbReference>
<dbReference type="InterPro" id="IPR003726">
    <property type="entry name" value="HCY_dom"/>
</dbReference>
<dbReference type="InterPro" id="IPR036589">
    <property type="entry name" value="HCY_dom_sf"/>
</dbReference>
<dbReference type="InterPro" id="IPR051486">
    <property type="entry name" value="Hcy_S-methyltransferase"/>
</dbReference>
<dbReference type="NCBIfam" id="NF007020">
    <property type="entry name" value="PRK09485.1"/>
    <property type="match status" value="1"/>
</dbReference>
<dbReference type="PANTHER" id="PTHR46015:SF11">
    <property type="entry name" value="HOMOCYSTEINE S-METHYLTRANSFERASE 3"/>
    <property type="match status" value="1"/>
</dbReference>
<dbReference type="PANTHER" id="PTHR46015">
    <property type="entry name" value="ZGC:172121"/>
    <property type="match status" value="1"/>
</dbReference>
<dbReference type="Pfam" id="PF02574">
    <property type="entry name" value="S-methyl_trans"/>
    <property type="match status" value="1"/>
</dbReference>
<dbReference type="PIRSF" id="PIRSF037505">
    <property type="entry name" value="Betaine_HMT"/>
    <property type="match status" value="1"/>
</dbReference>
<dbReference type="SUPFAM" id="SSF82282">
    <property type="entry name" value="Homocysteine S-methyltransferase"/>
    <property type="match status" value="1"/>
</dbReference>
<dbReference type="PROSITE" id="PS50970">
    <property type="entry name" value="HCY"/>
    <property type="match status" value="1"/>
</dbReference>